<reference key="1">
    <citation type="journal article" date="2001" name="Proc. Natl. Acad. Sci. U.S.A.">
        <title>Complete genomic sequence of Pasteurella multocida Pm70.</title>
        <authorList>
            <person name="May B.J."/>
            <person name="Zhang Q."/>
            <person name="Li L.L."/>
            <person name="Paustian M.L."/>
            <person name="Whittam T.S."/>
            <person name="Kapur V."/>
        </authorList>
    </citation>
    <scope>NUCLEOTIDE SEQUENCE [LARGE SCALE GENOMIC DNA]</scope>
    <source>
        <strain>Pm70</strain>
    </source>
</reference>
<sequence>MLVINMKEDLERALKNKEPSFIIKGELAEKMKKAQRITTIDKWILGALAFVFAVSFFPSTSDGLFGIIMNKILIAIGIFATFEIAIILAVILGGMTLAMMLYKNYHAEFGTDVKTEKITIKCTIKK</sequence>
<gene>
    <name type="ordered locus">PM1101</name>
</gene>
<dbReference type="EMBL" id="AE004439">
    <property type="protein sequence ID" value="AAK03185.1"/>
    <property type="molecule type" value="Genomic_DNA"/>
</dbReference>
<dbReference type="RefSeq" id="WP_010907017.1">
    <property type="nucleotide sequence ID" value="NC_002663.1"/>
</dbReference>
<dbReference type="STRING" id="272843.PM1101"/>
<dbReference type="EnsemblBacteria" id="AAK03185">
    <property type="protein sequence ID" value="AAK03185"/>
    <property type="gene ID" value="PM1101"/>
</dbReference>
<dbReference type="KEGG" id="pmu:PM1101"/>
<dbReference type="HOGENOM" id="CLU_1978342_0_0_6"/>
<dbReference type="OrthoDB" id="9998261at2"/>
<dbReference type="Proteomes" id="UP000000809">
    <property type="component" value="Chromosome"/>
</dbReference>
<dbReference type="GO" id="GO:0005886">
    <property type="term" value="C:plasma membrane"/>
    <property type="evidence" value="ECO:0007669"/>
    <property type="project" value="UniProtKB-SubCell"/>
</dbReference>
<comment type="subcellular location">
    <subcellularLocation>
        <location evidence="2">Cell membrane</location>
        <topology evidence="2">Multi-pass membrane protein</topology>
    </subcellularLocation>
</comment>
<organism>
    <name type="scientific">Pasteurella multocida (strain Pm70)</name>
    <dbReference type="NCBI Taxonomy" id="272843"/>
    <lineage>
        <taxon>Bacteria</taxon>
        <taxon>Pseudomonadati</taxon>
        <taxon>Pseudomonadota</taxon>
        <taxon>Gammaproteobacteria</taxon>
        <taxon>Pasteurellales</taxon>
        <taxon>Pasteurellaceae</taxon>
        <taxon>Pasteurella</taxon>
    </lineage>
</organism>
<keyword id="KW-1003">Cell membrane</keyword>
<keyword id="KW-0472">Membrane</keyword>
<keyword id="KW-1185">Reference proteome</keyword>
<keyword id="KW-0812">Transmembrane</keyword>
<keyword id="KW-1133">Transmembrane helix</keyword>
<evidence type="ECO:0000255" key="1"/>
<evidence type="ECO:0000305" key="2"/>
<feature type="chain" id="PRO_0000216313" description="Uncharacterized protein PM1101">
    <location>
        <begin position="1"/>
        <end position="126"/>
    </location>
</feature>
<feature type="transmembrane region" description="Helical" evidence="1">
    <location>
        <begin position="40"/>
        <end position="57"/>
    </location>
</feature>
<feature type="transmembrane region" description="Helical" evidence="1">
    <location>
        <begin position="72"/>
        <end position="94"/>
    </location>
</feature>
<name>Y1101_PASMU</name>
<proteinExistence type="predicted"/>
<protein>
    <recommendedName>
        <fullName>Uncharacterized protein PM1101</fullName>
    </recommendedName>
</protein>
<accession>Q9CLV1</accession>